<proteinExistence type="evidence at protein level"/>
<name>CCHA1_DELRA</name>
<reference evidence="3" key="1">
    <citation type="journal article" date="2012" name="PLoS ONE">
        <title>Peptidomics of the agriculturally damaging larval stage of the cabbage root fly Delia radicum (Diptera: Anthomyiidae).</title>
        <authorList>
            <person name="Zoephel J."/>
            <person name="Reiher W."/>
            <person name="Rexer K.-H."/>
            <person name="Kahnt J."/>
            <person name="Wegener C."/>
        </authorList>
    </citation>
    <scope>PROTEIN SEQUENCE</scope>
    <scope>TISSUE SPECIFICITY</scope>
    <scope>DEVELOPMENTAL STAGE</scope>
    <scope>MASS SPECTROMETRY</scope>
    <scope>AMIDATION AT HIS-13</scope>
    <source>
        <tissue evidence="1">Midgut</tissue>
    </source>
</reference>
<protein>
    <recommendedName>
        <fullName evidence="2">Neuropeptide CCHamide-1</fullName>
    </recommendedName>
</protein>
<keyword id="KW-0027">Amidation</keyword>
<keyword id="KW-0903">Direct protein sequencing</keyword>
<keyword id="KW-1015">Disulfide bond</keyword>
<keyword id="KW-0527">Neuropeptide</keyword>
<accession>B3EWM8</accession>
<feature type="peptide" id="PRO_0000419722" description="Neuropeptide CCHamide-1" evidence="1">
    <location>
        <begin position="1"/>
        <end position="13"/>
    </location>
</feature>
<feature type="modified residue" description="Histidine amide" evidence="1">
    <location>
        <position position="13"/>
    </location>
</feature>
<feature type="disulfide bond" evidence="1">
    <location>
        <begin position="2"/>
        <end position="9"/>
    </location>
</feature>
<feature type="unsure residue" description="L or I" evidence="1">
    <location>
        <position position="3"/>
    </location>
</feature>
<sequence length="13" mass="1450">SCLEYGHSCWGAH</sequence>
<organism>
    <name type="scientific">Delia radicum</name>
    <name type="common">Cabbage root fly</name>
    <name type="synonym">Anthomyia brassicae</name>
    <dbReference type="NCBI Taxonomy" id="30064"/>
    <lineage>
        <taxon>Eukaryota</taxon>
        <taxon>Metazoa</taxon>
        <taxon>Ecdysozoa</taxon>
        <taxon>Arthropoda</taxon>
        <taxon>Hexapoda</taxon>
        <taxon>Insecta</taxon>
        <taxon>Pterygota</taxon>
        <taxon>Neoptera</taxon>
        <taxon>Endopterygota</taxon>
        <taxon>Diptera</taxon>
        <taxon>Brachycera</taxon>
        <taxon>Muscomorpha</taxon>
        <taxon>Muscoidea</taxon>
        <taxon>Anthomyiidae</taxon>
        <taxon>Anthomyiinae</taxon>
        <taxon>Delia</taxon>
    </lineage>
</organism>
<evidence type="ECO:0000269" key="1">
    <source>
    </source>
</evidence>
<evidence type="ECO:0000303" key="2">
    <source>
    </source>
</evidence>
<evidence type="ECO:0000305" key="3"/>
<dbReference type="GO" id="GO:0007218">
    <property type="term" value="P:neuropeptide signaling pathway"/>
    <property type="evidence" value="ECO:0007669"/>
    <property type="project" value="UniProtKB-KW"/>
</dbReference>
<comment type="tissue specificity">
    <text evidence="1">Expressed in the midgut but not in the ring gland, CNS, thoracic perisympathetic organs (tPSO) and abdominal perisympathetic organs (aPSO) (at protein level).</text>
</comment>
<comment type="developmental stage">
    <text evidence="1">Detected in larvae.</text>
</comment>
<comment type="mass spectrometry" mass="1446.56" method="MALDI" evidence="1"/>